<feature type="chain" id="PRO_0000107339" description="Uncharacterized protein MTH_1153">
    <location>
        <begin position="1"/>
        <end position="529"/>
    </location>
</feature>
<protein>
    <recommendedName>
        <fullName>Uncharacterized protein MTH_1153</fullName>
    </recommendedName>
</protein>
<dbReference type="EMBL" id="AE000666">
    <property type="protein sequence ID" value="AAB85642.1"/>
    <property type="molecule type" value="Genomic_DNA"/>
</dbReference>
<dbReference type="PIR" id="F69020">
    <property type="entry name" value="F69020"/>
</dbReference>
<dbReference type="STRING" id="187420.MTH_1153"/>
<dbReference type="PaxDb" id="187420-MTH_1153"/>
<dbReference type="EnsemblBacteria" id="AAB85642">
    <property type="protein sequence ID" value="AAB85642"/>
    <property type="gene ID" value="MTH_1153"/>
</dbReference>
<dbReference type="KEGG" id="mth:MTH_1153"/>
<dbReference type="PATRIC" id="fig|187420.15.peg.1130"/>
<dbReference type="HOGENOM" id="CLU_541447_0_0_2"/>
<dbReference type="InParanoid" id="O27221"/>
<dbReference type="Proteomes" id="UP000005223">
    <property type="component" value="Chromosome"/>
</dbReference>
<dbReference type="InterPro" id="IPR008303">
    <property type="entry name" value="Methan_mark_14"/>
</dbReference>
<dbReference type="NCBIfam" id="TIGR03285">
    <property type="entry name" value="methan_mark_14"/>
    <property type="match status" value="1"/>
</dbReference>
<dbReference type="Pfam" id="PF09887">
    <property type="entry name" value="DUF2114"/>
    <property type="match status" value="1"/>
</dbReference>
<dbReference type="PIRSF" id="PIRSF016937">
    <property type="entry name" value="UCP016937"/>
    <property type="match status" value="1"/>
</dbReference>
<organism>
    <name type="scientific">Methanothermobacter thermautotrophicus (strain ATCC 29096 / DSM 1053 / JCM 10044 / NBRC 100330 / Delta H)</name>
    <name type="common">Methanobacterium thermoautotrophicum</name>
    <dbReference type="NCBI Taxonomy" id="187420"/>
    <lineage>
        <taxon>Archaea</taxon>
        <taxon>Methanobacteriati</taxon>
        <taxon>Methanobacteriota</taxon>
        <taxon>Methanomada group</taxon>
        <taxon>Methanobacteria</taxon>
        <taxon>Methanobacteriales</taxon>
        <taxon>Methanobacteriaceae</taxon>
        <taxon>Methanothermobacter</taxon>
    </lineage>
</organism>
<reference key="1">
    <citation type="journal article" date="1997" name="J. Bacteriol.">
        <title>Complete genome sequence of Methanobacterium thermoautotrophicum deltaH: functional analysis and comparative genomics.</title>
        <authorList>
            <person name="Smith D.R."/>
            <person name="Doucette-Stamm L.A."/>
            <person name="Deloughery C."/>
            <person name="Lee H.-M."/>
            <person name="Dubois J."/>
            <person name="Aldredge T."/>
            <person name="Bashirzadeh R."/>
            <person name="Blakely D."/>
            <person name="Cook R."/>
            <person name="Gilbert K."/>
            <person name="Harrison D."/>
            <person name="Hoang L."/>
            <person name="Keagle P."/>
            <person name="Lumm W."/>
            <person name="Pothier B."/>
            <person name="Qiu D."/>
            <person name="Spadafora R."/>
            <person name="Vicare R."/>
            <person name="Wang Y."/>
            <person name="Wierzbowski J."/>
            <person name="Gibson R."/>
            <person name="Jiwani N."/>
            <person name="Caruso A."/>
            <person name="Bush D."/>
            <person name="Safer H."/>
            <person name="Patwell D."/>
            <person name="Prabhakar S."/>
            <person name="McDougall S."/>
            <person name="Shimer G."/>
            <person name="Goyal A."/>
            <person name="Pietrovski S."/>
            <person name="Church G.M."/>
            <person name="Daniels C.J."/>
            <person name="Mao J.-I."/>
            <person name="Rice P."/>
            <person name="Noelling J."/>
            <person name="Reeve J.N."/>
        </authorList>
    </citation>
    <scope>NUCLEOTIDE SEQUENCE [LARGE SCALE GENOMIC DNA]</scope>
    <source>
        <strain>ATCC 29096 / DSM 1053 / JCM 10044 / NBRC 100330 / Delta H</strain>
    </source>
</reference>
<gene>
    <name type="ordered locus">MTH_1153</name>
</gene>
<comment type="similarity">
    <text evidence="1">To M.jannaschii MJ1451.</text>
</comment>
<keyword id="KW-1185">Reference proteome</keyword>
<sequence>MKIPFKPFILFHLTLFIRFILTPQIQYYIKSGGNHLSFLSRLFGPKPIIAKSRFITIEDTKTAPFTKKTVGSGYSMRPDVYYIVASVELGNTTTKCILTATNLNTSRTYLLDKTVKMTRDIRPPREREEVFGKTVWGVELTKEAVSELVRDTILESLRRAKVDIERDLDFVVRSTGVTAGFGSPEEVGKLIIALADGCLAAGIPPRKMAPALSKENIPERLREFCYLDRVIFDGAVASVIPPTGREVVANEMEGELVTAGIKVGSKWTNVDYRNPCVSLDFGTTLAGRIVNADEPYARTVGNFCGLAGAIPDAIIRGTEMVDCRGGAALDLYKKSILKGANWKKARRHAERIHDEIIDIRKVPANRKRFGTVPVDTEAAYSAGTTLIGCDAGKNGDKLPELTEIGHSIYQEDGIHTLFATLDHVSALIAKRLIDEAFEEGVIEEGSVLGVTGRAGITGTKPSLILEYVKDRFRDCIFVSDALAMGAAVMARCMNSMGTPHKPLGGRQNGPCILGMRRKLQSRKEDKWIE</sequence>
<evidence type="ECO:0000305" key="1"/>
<proteinExistence type="predicted"/>
<accession>O27221</accession>
<name>Y1153_METTH</name>